<dbReference type="EMBL" id="F14562">
    <property type="protein sequence ID" value="CAA23126.1"/>
    <property type="molecule type" value="mRNA"/>
</dbReference>
<dbReference type="STRING" id="9823.ENSSSCP00000053276"/>
<dbReference type="PaxDb" id="9823-ENSSSCP00000014427"/>
<dbReference type="PeptideAtlas" id="Q29268"/>
<dbReference type="eggNOG" id="KOG1300">
    <property type="taxonomic scope" value="Eukaryota"/>
</dbReference>
<dbReference type="InParanoid" id="Q29268"/>
<dbReference type="Proteomes" id="UP000008227">
    <property type="component" value="Unplaced"/>
</dbReference>
<dbReference type="Proteomes" id="UP000314985">
    <property type="component" value="Unplaced"/>
</dbReference>
<dbReference type="Proteomes" id="UP000694570">
    <property type="component" value="Unplaced"/>
</dbReference>
<dbReference type="Proteomes" id="UP000694571">
    <property type="component" value="Unplaced"/>
</dbReference>
<dbReference type="Proteomes" id="UP000694720">
    <property type="component" value="Unplaced"/>
</dbReference>
<dbReference type="Proteomes" id="UP000694722">
    <property type="component" value="Unplaced"/>
</dbReference>
<dbReference type="Proteomes" id="UP000694723">
    <property type="component" value="Unplaced"/>
</dbReference>
<dbReference type="Proteomes" id="UP000694724">
    <property type="component" value="Unplaced"/>
</dbReference>
<dbReference type="Proteomes" id="UP000694725">
    <property type="component" value="Unplaced"/>
</dbReference>
<dbReference type="Proteomes" id="UP000694726">
    <property type="component" value="Unplaced"/>
</dbReference>
<dbReference type="Proteomes" id="UP000694727">
    <property type="component" value="Unplaced"/>
</dbReference>
<dbReference type="Proteomes" id="UP000694728">
    <property type="component" value="Unplaced"/>
</dbReference>
<dbReference type="GO" id="GO:0006887">
    <property type="term" value="P:exocytosis"/>
    <property type="evidence" value="ECO:0007669"/>
    <property type="project" value="UniProtKB-KW"/>
</dbReference>
<dbReference type="GO" id="GO:0015031">
    <property type="term" value="P:protein transport"/>
    <property type="evidence" value="ECO:0007669"/>
    <property type="project" value="UniProtKB-KW"/>
</dbReference>
<dbReference type="FunFam" id="3.40.50.2060:FF:000001">
    <property type="entry name" value="syntaxin-binding protein 1 isoform X2"/>
    <property type="match status" value="1"/>
</dbReference>
<dbReference type="Gene3D" id="3.40.50.2060">
    <property type="match status" value="1"/>
</dbReference>
<dbReference type="InterPro" id="IPR043154">
    <property type="entry name" value="Sec-1-like_dom1"/>
</dbReference>
<dbReference type="InterPro" id="IPR001619">
    <property type="entry name" value="Sec1-like"/>
</dbReference>
<dbReference type="InterPro" id="IPR036045">
    <property type="entry name" value="Sec1-like_sf"/>
</dbReference>
<dbReference type="PANTHER" id="PTHR11679">
    <property type="entry name" value="VESICLE PROTEIN SORTING-ASSOCIATED"/>
    <property type="match status" value="1"/>
</dbReference>
<dbReference type="Pfam" id="PF00995">
    <property type="entry name" value="Sec1"/>
    <property type="match status" value="1"/>
</dbReference>
<dbReference type="SUPFAM" id="SSF56815">
    <property type="entry name" value="Sec1/munc18-like (SM) proteins"/>
    <property type="match status" value="1"/>
</dbReference>
<keyword id="KW-0268">Exocytosis</keyword>
<keyword id="KW-0653">Protein transport</keyword>
<keyword id="KW-1185">Reference proteome</keyword>
<keyword id="KW-0813">Transport</keyword>
<protein>
    <recommendedName>
        <fullName>Syntaxin-binding protein 2</fullName>
    </recommendedName>
    <alternativeName>
        <fullName>Protein unc-18 homolog 2</fullName>
        <shortName>Munc18-2</shortName>
        <shortName>Unc18-2</shortName>
    </alternativeName>
    <alternativeName>
        <fullName>Protein unc-18 homolog B</fullName>
        <shortName>Unc-18B</shortName>
    </alternativeName>
</protein>
<feature type="chain" id="PRO_0000206283" description="Syntaxin-binding protein 2">
    <location>
        <begin position="1"/>
        <end position="118" status="greater than"/>
    </location>
</feature>
<feature type="non-terminal residue">
    <location>
        <position position="118"/>
    </location>
</feature>
<comment type="function">
    <text evidence="1">Involved in intracellular vesicle trafficking and vesicle fusion with membranes. Contributes to the granule exocytosis machinery through interaction with soluble N-ethylmaleimide-sensitive factor attachment protein receptor (SNARE) proteins that regulate membrane fusion. Regulates cytotoxic granule exocytosis in natural killer (NK) cells (By similarity).</text>
</comment>
<comment type="subunit">
    <text evidence="1">Interacts with STX1A, STX2 and STX3. Interacts with STX11.</text>
</comment>
<comment type="similarity">
    <text evidence="2">Belongs to the STXBP/unc-18/SEC1 family.</text>
</comment>
<organism>
    <name type="scientific">Sus scrofa</name>
    <name type="common">Pig</name>
    <dbReference type="NCBI Taxonomy" id="9823"/>
    <lineage>
        <taxon>Eukaryota</taxon>
        <taxon>Metazoa</taxon>
        <taxon>Chordata</taxon>
        <taxon>Craniata</taxon>
        <taxon>Vertebrata</taxon>
        <taxon>Euteleostomi</taxon>
        <taxon>Mammalia</taxon>
        <taxon>Eutheria</taxon>
        <taxon>Laurasiatheria</taxon>
        <taxon>Artiodactyla</taxon>
        <taxon>Suina</taxon>
        <taxon>Suidae</taxon>
        <taxon>Sus</taxon>
    </lineage>
</organism>
<evidence type="ECO:0000250" key="1"/>
<evidence type="ECO:0000305" key="2"/>
<name>STXB2_PIG</name>
<sequence length="118" mass="13033">MAPSGLKAVVGEKILSGVIRSVKKDGEWKVLIMDHPSMRILSSCCKMSDILAEGITIVEDINKRREPIPSLEAIYLLSPTEKSVQALIXDFRGXPTXTYKAAHVFFTXTCPXPLFSEL</sequence>
<accession>Q29268</accession>
<gene>
    <name type="primary">STXBP2</name>
    <name type="synonym">UNC18B</name>
</gene>
<reference key="1">
    <citation type="journal article" date="1996" name="Mamm. Genome">
        <title>Evaluation and characterization of a porcine small intestine cDNA library: analysis of 839 clones.</title>
        <authorList>
            <person name="Winteroe A.K."/>
            <person name="Fredholm M."/>
            <person name="Davies W."/>
        </authorList>
    </citation>
    <scope>NUCLEOTIDE SEQUENCE [LARGE SCALE MRNA]</scope>
    <source>
        <tissue>Small intestine</tissue>
    </source>
</reference>
<proteinExistence type="evidence at transcript level"/>